<gene>
    <name evidence="1" type="primary">rpoB</name>
    <name type="ordered locus">BALH_0100</name>
</gene>
<comment type="function">
    <text evidence="1">DNA-dependent RNA polymerase catalyzes the transcription of DNA into RNA using the four ribonucleoside triphosphates as substrates.</text>
</comment>
<comment type="catalytic activity">
    <reaction evidence="1">
        <text>RNA(n) + a ribonucleoside 5'-triphosphate = RNA(n+1) + diphosphate</text>
        <dbReference type="Rhea" id="RHEA:21248"/>
        <dbReference type="Rhea" id="RHEA-COMP:14527"/>
        <dbReference type="Rhea" id="RHEA-COMP:17342"/>
        <dbReference type="ChEBI" id="CHEBI:33019"/>
        <dbReference type="ChEBI" id="CHEBI:61557"/>
        <dbReference type="ChEBI" id="CHEBI:140395"/>
        <dbReference type="EC" id="2.7.7.6"/>
    </reaction>
</comment>
<comment type="subunit">
    <text evidence="1">The RNAP catalytic core consists of 2 alpha, 1 beta, 1 beta' and 1 omega subunit. When a sigma factor is associated with the core the holoenzyme is formed, which can initiate transcription.</text>
</comment>
<comment type="similarity">
    <text evidence="1">Belongs to the RNA polymerase beta chain family.</text>
</comment>
<comment type="sequence caution" evidence="3">
    <conflict type="erroneous initiation">
        <sequence resource="EMBL-CDS" id="ABK83515"/>
    </conflict>
</comment>
<feature type="chain" id="PRO_0000300280" description="DNA-directed RNA polymerase subunit beta">
    <location>
        <begin position="1"/>
        <end position="1177"/>
    </location>
</feature>
<feature type="region of interest" description="Disordered" evidence="2">
    <location>
        <begin position="1147"/>
        <end position="1177"/>
    </location>
</feature>
<feature type="compositionally biased region" description="Acidic residues" evidence="2">
    <location>
        <begin position="1147"/>
        <end position="1161"/>
    </location>
</feature>
<feature type="compositionally biased region" description="Basic and acidic residues" evidence="2">
    <location>
        <begin position="1162"/>
        <end position="1177"/>
    </location>
</feature>
<dbReference type="EC" id="2.7.7.6" evidence="1"/>
<dbReference type="EMBL" id="CP000485">
    <property type="protein sequence ID" value="ABK83515.1"/>
    <property type="status" value="ALT_INIT"/>
    <property type="molecule type" value="Genomic_DNA"/>
</dbReference>
<dbReference type="RefSeq" id="WP_000147554.1">
    <property type="nucleotide sequence ID" value="NC_008600.1"/>
</dbReference>
<dbReference type="SMR" id="A0R8H2"/>
<dbReference type="GeneID" id="75083383"/>
<dbReference type="KEGG" id="btl:BALH_0100"/>
<dbReference type="HOGENOM" id="CLU_000524_4_1_9"/>
<dbReference type="GO" id="GO:0000428">
    <property type="term" value="C:DNA-directed RNA polymerase complex"/>
    <property type="evidence" value="ECO:0007669"/>
    <property type="project" value="UniProtKB-KW"/>
</dbReference>
<dbReference type="GO" id="GO:0003677">
    <property type="term" value="F:DNA binding"/>
    <property type="evidence" value="ECO:0007669"/>
    <property type="project" value="UniProtKB-UniRule"/>
</dbReference>
<dbReference type="GO" id="GO:0003899">
    <property type="term" value="F:DNA-directed RNA polymerase activity"/>
    <property type="evidence" value="ECO:0007669"/>
    <property type="project" value="UniProtKB-UniRule"/>
</dbReference>
<dbReference type="GO" id="GO:0032549">
    <property type="term" value="F:ribonucleoside binding"/>
    <property type="evidence" value="ECO:0007669"/>
    <property type="project" value="InterPro"/>
</dbReference>
<dbReference type="GO" id="GO:0006351">
    <property type="term" value="P:DNA-templated transcription"/>
    <property type="evidence" value="ECO:0007669"/>
    <property type="project" value="UniProtKB-UniRule"/>
</dbReference>
<dbReference type="CDD" id="cd00653">
    <property type="entry name" value="RNA_pol_B_RPB2"/>
    <property type="match status" value="1"/>
</dbReference>
<dbReference type="FunFam" id="3.90.1800.10:FF:000001">
    <property type="entry name" value="DNA-directed RNA polymerase subunit beta"/>
    <property type="match status" value="1"/>
</dbReference>
<dbReference type="Gene3D" id="2.40.50.100">
    <property type="match status" value="1"/>
</dbReference>
<dbReference type="Gene3D" id="2.40.50.150">
    <property type="match status" value="1"/>
</dbReference>
<dbReference type="Gene3D" id="3.90.1100.10">
    <property type="match status" value="2"/>
</dbReference>
<dbReference type="Gene3D" id="2.30.150.10">
    <property type="entry name" value="DNA-directed RNA polymerase, beta subunit, external 1 domain"/>
    <property type="match status" value="1"/>
</dbReference>
<dbReference type="Gene3D" id="2.40.270.10">
    <property type="entry name" value="DNA-directed RNA polymerase, subunit 2, domain 6"/>
    <property type="match status" value="1"/>
</dbReference>
<dbReference type="Gene3D" id="3.90.1800.10">
    <property type="entry name" value="RNA polymerase alpha subunit dimerisation domain"/>
    <property type="match status" value="1"/>
</dbReference>
<dbReference type="Gene3D" id="3.90.1110.10">
    <property type="entry name" value="RNA polymerase Rpb2, domain 2"/>
    <property type="match status" value="1"/>
</dbReference>
<dbReference type="HAMAP" id="MF_01321">
    <property type="entry name" value="RNApol_bact_RpoB"/>
    <property type="match status" value="1"/>
</dbReference>
<dbReference type="InterPro" id="IPR042107">
    <property type="entry name" value="DNA-dir_RNA_pol_bsu_ext_1_sf"/>
</dbReference>
<dbReference type="InterPro" id="IPR019462">
    <property type="entry name" value="DNA-dir_RNA_pol_bsu_external_1"/>
</dbReference>
<dbReference type="InterPro" id="IPR015712">
    <property type="entry name" value="DNA-dir_RNA_pol_su2"/>
</dbReference>
<dbReference type="InterPro" id="IPR007120">
    <property type="entry name" value="DNA-dir_RNAP_su2_dom"/>
</dbReference>
<dbReference type="InterPro" id="IPR037033">
    <property type="entry name" value="DNA-dir_RNAP_su2_hyb_sf"/>
</dbReference>
<dbReference type="InterPro" id="IPR010243">
    <property type="entry name" value="RNA_pol_bsu_bac"/>
</dbReference>
<dbReference type="InterPro" id="IPR007121">
    <property type="entry name" value="RNA_pol_bsu_CS"/>
</dbReference>
<dbReference type="InterPro" id="IPR007644">
    <property type="entry name" value="RNA_pol_bsu_protrusion"/>
</dbReference>
<dbReference type="InterPro" id="IPR007642">
    <property type="entry name" value="RNA_pol_Rpb2_2"/>
</dbReference>
<dbReference type="InterPro" id="IPR037034">
    <property type="entry name" value="RNA_pol_Rpb2_2_sf"/>
</dbReference>
<dbReference type="InterPro" id="IPR007645">
    <property type="entry name" value="RNA_pol_Rpb2_3"/>
</dbReference>
<dbReference type="InterPro" id="IPR007641">
    <property type="entry name" value="RNA_pol_Rpb2_7"/>
</dbReference>
<dbReference type="InterPro" id="IPR014724">
    <property type="entry name" value="RNA_pol_RPB2_OB-fold"/>
</dbReference>
<dbReference type="NCBIfam" id="NF001616">
    <property type="entry name" value="PRK00405.1"/>
    <property type="match status" value="1"/>
</dbReference>
<dbReference type="NCBIfam" id="TIGR02013">
    <property type="entry name" value="rpoB"/>
    <property type="match status" value="1"/>
</dbReference>
<dbReference type="PANTHER" id="PTHR20856">
    <property type="entry name" value="DNA-DIRECTED RNA POLYMERASE I SUBUNIT 2"/>
    <property type="match status" value="1"/>
</dbReference>
<dbReference type="Pfam" id="PF04563">
    <property type="entry name" value="RNA_pol_Rpb2_1"/>
    <property type="match status" value="1"/>
</dbReference>
<dbReference type="Pfam" id="PF04561">
    <property type="entry name" value="RNA_pol_Rpb2_2"/>
    <property type="match status" value="2"/>
</dbReference>
<dbReference type="Pfam" id="PF04565">
    <property type="entry name" value="RNA_pol_Rpb2_3"/>
    <property type="match status" value="1"/>
</dbReference>
<dbReference type="Pfam" id="PF10385">
    <property type="entry name" value="RNA_pol_Rpb2_45"/>
    <property type="match status" value="1"/>
</dbReference>
<dbReference type="Pfam" id="PF00562">
    <property type="entry name" value="RNA_pol_Rpb2_6"/>
    <property type="match status" value="1"/>
</dbReference>
<dbReference type="Pfam" id="PF04560">
    <property type="entry name" value="RNA_pol_Rpb2_7"/>
    <property type="match status" value="1"/>
</dbReference>
<dbReference type="SUPFAM" id="SSF64484">
    <property type="entry name" value="beta and beta-prime subunits of DNA dependent RNA-polymerase"/>
    <property type="match status" value="1"/>
</dbReference>
<dbReference type="PROSITE" id="PS01166">
    <property type="entry name" value="RNA_POL_BETA"/>
    <property type="match status" value="1"/>
</dbReference>
<name>RPOB_BACAH</name>
<sequence length="1177" mass="131893">MTGQLVQYGRHRQRRSYARISEVLELPNLIEIQTSSYQWFLDEGLREMFQDISPIEDFTGNLSLEFIDYSLGEPKYSVDECKERDVTYAAPLRVKVRLINKETGEVKEQDVFMGDFPLMTETGTFVINGAERVIVSQLVRSPSVYYSGKVDKNGKRGFTATVIPNRGAWLEYETDAKDVVYVRIDRTRKLPVTVLLRALGFGSDQEITELLGDNEYLSNTLEKDNTDSTEKALLEIYERLRPGEPPTVENAKSLLVSRFFDPKRYDLANVGRYKINKKLHIKNRLFNQRLAETLVDPETGEILAAEGTILDRRTLDRILPYLEKNIGFKTAKPMGGVVEGDVELQSIKIYAPESEGERVINVIGNANITRDVKHITPGDILASISYFFNLLYKVGDTDDIDHLGNRRLRSVGELLQNQFRIGLSRMERVVRERMSIQDTNAITPQALINIRPVIASIKEFFGSSQLSQFMDQTNPLAELTHKRRLSALGPGGLTRERAGFEVRDVHYSHYGRMCPIETPEGPNIGLINSLSSFAKVNEFGFIETPYRRVDPETGLVTGHVDYLTADEEDNYVVAQANMKLSEEGEFLDEDIVARFRGENIVTNKERIDYMDVSPKQVVSAATACIPFLENDDSNRALMGANMQRQAVPLMNPESPIVGTGMEYVSAKDSGAAVICKHPGIVERVEAREVWVRRYVEVDGQTVKGDLDRYKMQKFIRSNQGTCYNQRPIVSVGNEVVKGEILADGPSMELGELALGRNVLVGFMTWDGYNYEDAIIMSERLVKDDVYTSIHIEEYESEARDTKLGPEEITRDIPNVGEDALRNLDERGIIRVGAEVKDGDLLVGKVTPKGVTELTAEERLLHAIFGEKAREVRDTSLRVPHGGGGIILDVKVFNREDGDELPPGVNQLVRAYIVQKRKISEGDKMAGRHGNKGVISRILPEEDMPYLPDGTPIDIMLNPLGVPSRMNIGQVLELHLGMAARYLGIHIATPVFDGAREEDVWGTIEEAGMANDAKTILYDGRTGEPFDNRVSVGVMYMIKLAHMVDDKLHARSTGPYSLVTQQPLGGKAQFGGQRFGEMEVWALEAYGAAYTLQEILTVKSDDVVGRVKTYEAIVKGENVPEPGVPESFKVLIKELQSLGMDVKMMSSDDTEIEMRDTEDDDDHQSADKLNVEVETTKE</sequence>
<keyword id="KW-0240">DNA-directed RNA polymerase</keyword>
<keyword id="KW-0548">Nucleotidyltransferase</keyword>
<keyword id="KW-0804">Transcription</keyword>
<keyword id="KW-0808">Transferase</keyword>
<evidence type="ECO:0000255" key="1">
    <source>
        <dbReference type="HAMAP-Rule" id="MF_01321"/>
    </source>
</evidence>
<evidence type="ECO:0000256" key="2">
    <source>
        <dbReference type="SAM" id="MobiDB-lite"/>
    </source>
</evidence>
<evidence type="ECO:0000305" key="3"/>
<proteinExistence type="inferred from homology"/>
<reference key="1">
    <citation type="journal article" date="2007" name="J. Bacteriol.">
        <title>The complete genome sequence of Bacillus thuringiensis Al Hakam.</title>
        <authorList>
            <person name="Challacombe J.F."/>
            <person name="Altherr M.R."/>
            <person name="Xie G."/>
            <person name="Bhotika S.S."/>
            <person name="Brown N."/>
            <person name="Bruce D."/>
            <person name="Campbell C.S."/>
            <person name="Campbell M.L."/>
            <person name="Chen J."/>
            <person name="Chertkov O."/>
            <person name="Cleland C."/>
            <person name="Dimitrijevic M."/>
            <person name="Doggett N.A."/>
            <person name="Fawcett J.J."/>
            <person name="Glavina T."/>
            <person name="Goodwin L.A."/>
            <person name="Green L.D."/>
            <person name="Han C.S."/>
            <person name="Hill K.K."/>
            <person name="Hitchcock P."/>
            <person name="Jackson P.J."/>
            <person name="Keim P."/>
            <person name="Kewalramani A.R."/>
            <person name="Longmire J."/>
            <person name="Lucas S."/>
            <person name="Malfatti S."/>
            <person name="Martinez D."/>
            <person name="McMurry K."/>
            <person name="Meincke L.J."/>
            <person name="Misra M."/>
            <person name="Moseman B.L."/>
            <person name="Mundt M."/>
            <person name="Munk A.C."/>
            <person name="Okinaka R.T."/>
            <person name="Parson-Quintana B."/>
            <person name="Reilly L.P."/>
            <person name="Richardson P."/>
            <person name="Robinson D.L."/>
            <person name="Saunders E."/>
            <person name="Tapia R."/>
            <person name="Tesmer J.G."/>
            <person name="Thayer N."/>
            <person name="Thompson L.S."/>
            <person name="Tice H."/>
            <person name="Ticknor L.O."/>
            <person name="Wills P.L."/>
            <person name="Gilna P."/>
            <person name="Brettin T.S."/>
        </authorList>
    </citation>
    <scope>NUCLEOTIDE SEQUENCE [LARGE SCALE GENOMIC DNA]</scope>
    <source>
        <strain>Al Hakam</strain>
    </source>
</reference>
<organism>
    <name type="scientific">Bacillus thuringiensis (strain Al Hakam)</name>
    <dbReference type="NCBI Taxonomy" id="412694"/>
    <lineage>
        <taxon>Bacteria</taxon>
        <taxon>Bacillati</taxon>
        <taxon>Bacillota</taxon>
        <taxon>Bacilli</taxon>
        <taxon>Bacillales</taxon>
        <taxon>Bacillaceae</taxon>
        <taxon>Bacillus</taxon>
        <taxon>Bacillus cereus group</taxon>
    </lineage>
</organism>
<accession>A0R8H2</accession>
<protein>
    <recommendedName>
        <fullName evidence="1">DNA-directed RNA polymerase subunit beta</fullName>
        <shortName evidence="1">RNAP subunit beta</shortName>
        <ecNumber evidence="1">2.7.7.6</ecNumber>
    </recommendedName>
    <alternativeName>
        <fullName evidence="1">RNA polymerase subunit beta</fullName>
    </alternativeName>
    <alternativeName>
        <fullName evidence="1">Transcriptase subunit beta</fullName>
    </alternativeName>
</protein>